<gene>
    <name evidence="1" type="primary">prs</name>
    <name type="synonym">prsA</name>
    <name type="ordered locus">WS1635</name>
</gene>
<keyword id="KW-0067">ATP-binding</keyword>
<keyword id="KW-0963">Cytoplasm</keyword>
<keyword id="KW-0418">Kinase</keyword>
<keyword id="KW-0460">Magnesium</keyword>
<keyword id="KW-0479">Metal-binding</keyword>
<keyword id="KW-0545">Nucleotide biosynthesis</keyword>
<keyword id="KW-0547">Nucleotide-binding</keyword>
<keyword id="KW-1185">Reference proteome</keyword>
<keyword id="KW-0808">Transferase</keyword>
<organism>
    <name type="scientific">Wolinella succinogenes (strain ATCC 29543 / DSM 1740 / CCUG 13145 / JCM 31913 / LMG 7466 / NCTC 11488 / FDC 602W)</name>
    <name type="common">Vibrio succinogenes</name>
    <dbReference type="NCBI Taxonomy" id="273121"/>
    <lineage>
        <taxon>Bacteria</taxon>
        <taxon>Pseudomonadati</taxon>
        <taxon>Campylobacterota</taxon>
        <taxon>Epsilonproteobacteria</taxon>
        <taxon>Campylobacterales</taxon>
        <taxon>Helicobacteraceae</taxon>
        <taxon>Wolinella</taxon>
    </lineage>
</organism>
<name>KPRS_WOLSU</name>
<reference key="1">
    <citation type="journal article" date="2003" name="Proc. Natl. Acad. Sci. U.S.A.">
        <title>Complete genome sequence and analysis of Wolinella succinogenes.</title>
        <authorList>
            <person name="Baar C."/>
            <person name="Eppinger M."/>
            <person name="Raddatz G."/>
            <person name="Simon J."/>
            <person name="Lanz C."/>
            <person name="Klimmek O."/>
            <person name="Nandakumar R."/>
            <person name="Gross R."/>
            <person name="Rosinus A."/>
            <person name="Keller H."/>
            <person name="Jagtap P."/>
            <person name="Linke B."/>
            <person name="Meyer F."/>
            <person name="Lederer H."/>
            <person name="Schuster S.C."/>
        </authorList>
    </citation>
    <scope>NUCLEOTIDE SEQUENCE [LARGE SCALE GENOMIC DNA]</scope>
    <source>
        <strain>ATCC 29543 / DSM 1740 / CCUG 13145 / JCM 31913 / LMG 7466 / NCTC 11488 / FDC 602W</strain>
    </source>
</reference>
<comment type="function">
    <text evidence="1">Involved in the biosynthesis of the central metabolite phospho-alpha-D-ribosyl-1-pyrophosphate (PRPP) via the transfer of pyrophosphoryl group from ATP to 1-hydroxyl of ribose-5-phosphate (Rib-5-P).</text>
</comment>
<comment type="catalytic activity">
    <reaction evidence="1">
        <text>D-ribose 5-phosphate + ATP = 5-phospho-alpha-D-ribose 1-diphosphate + AMP + H(+)</text>
        <dbReference type="Rhea" id="RHEA:15609"/>
        <dbReference type="ChEBI" id="CHEBI:15378"/>
        <dbReference type="ChEBI" id="CHEBI:30616"/>
        <dbReference type="ChEBI" id="CHEBI:58017"/>
        <dbReference type="ChEBI" id="CHEBI:78346"/>
        <dbReference type="ChEBI" id="CHEBI:456215"/>
        <dbReference type="EC" id="2.7.6.1"/>
    </reaction>
</comment>
<comment type="cofactor">
    <cofactor evidence="1">
        <name>Mg(2+)</name>
        <dbReference type="ChEBI" id="CHEBI:18420"/>
    </cofactor>
    <text evidence="1">Binds 2 Mg(2+) ions per subunit.</text>
</comment>
<comment type="pathway">
    <text evidence="1">Metabolic intermediate biosynthesis; 5-phospho-alpha-D-ribose 1-diphosphate biosynthesis; 5-phospho-alpha-D-ribose 1-diphosphate from D-ribose 5-phosphate (route I): step 1/1.</text>
</comment>
<comment type="subunit">
    <text evidence="1">Homohexamer.</text>
</comment>
<comment type="subcellular location">
    <subcellularLocation>
        <location evidence="1">Cytoplasm</location>
    </subcellularLocation>
</comment>
<comment type="similarity">
    <text evidence="1">Belongs to the ribose-phosphate pyrophosphokinase family. Class I subfamily.</text>
</comment>
<accession>Q7M8J0</accession>
<feature type="chain" id="PRO_0000141226" description="Ribose-phosphate pyrophosphokinase">
    <location>
        <begin position="1"/>
        <end position="309"/>
    </location>
</feature>
<feature type="active site" evidence="1">
    <location>
        <position position="192"/>
    </location>
</feature>
<feature type="binding site" evidence="1">
    <location>
        <begin position="37"/>
        <end position="39"/>
    </location>
    <ligand>
        <name>ATP</name>
        <dbReference type="ChEBI" id="CHEBI:30616"/>
    </ligand>
</feature>
<feature type="binding site" evidence="1">
    <location>
        <begin position="96"/>
        <end position="97"/>
    </location>
    <ligand>
        <name>ATP</name>
        <dbReference type="ChEBI" id="CHEBI:30616"/>
    </ligand>
</feature>
<feature type="binding site" evidence="1">
    <location>
        <position position="130"/>
    </location>
    <ligand>
        <name>Mg(2+)</name>
        <dbReference type="ChEBI" id="CHEBI:18420"/>
        <label>1</label>
    </ligand>
</feature>
<feature type="binding site" evidence="1">
    <location>
        <position position="169"/>
    </location>
    <ligand>
        <name>Mg(2+)</name>
        <dbReference type="ChEBI" id="CHEBI:18420"/>
        <label>2</label>
    </ligand>
</feature>
<feature type="binding site" evidence="1">
    <location>
        <position position="194"/>
    </location>
    <ligand>
        <name>D-ribose 5-phosphate</name>
        <dbReference type="ChEBI" id="CHEBI:78346"/>
    </ligand>
</feature>
<feature type="binding site" evidence="1">
    <location>
        <position position="218"/>
    </location>
    <ligand>
        <name>D-ribose 5-phosphate</name>
        <dbReference type="ChEBI" id="CHEBI:78346"/>
    </ligand>
</feature>
<feature type="binding site" evidence="1">
    <location>
        <begin position="222"/>
        <end position="226"/>
    </location>
    <ligand>
        <name>D-ribose 5-phosphate</name>
        <dbReference type="ChEBI" id="CHEBI:78346"/>
    </ligand>
</feature>
<dbReference type="EC" id="2.7.6.1" evidence="1"/>
<dbReference type="EMBL" id="BX571661">
    <property type="protein sequence ID" value="CAE10666.1"/>
    <property type="molecule type" value="Genomic_DNA"/>
</dbReference>
<dbReference type="RefSeq" id="WP_011139450.1">
    <property type="nucleotide sequence ID" value="NC_005090.1"/>
</dbReference>
<dbReference type="SMR" id="Q7M8J0"/>
<dbReference type="STRING" id="273121.WS1635"/>
<dbReference type="KEGG" id="wsu:WS1635"/>
<dbReference type="eggNOG" id="COG0462">
    <property type="taxonomic scope" value="Bacteria"/>
</dbReference>
<dbReference type="HOGENOM" id="CLU_033546_4_0_7"/>
<dbReference type="UniPathway" id="UPA00087">
    <property type="reaction ID" value="UER00172"/>
</dbReference>
<dbReference type="Proteomes" id="UP000000422">
    <property type="component" value="Chromosome"/>
</dbReference>
<dbReference type="GO" id="GO:0005737">
    <property type="term" value="C:cytoplasm"/>
    <property type="evidence" value="ECO:0007669"/>
    <property type="project" value="UniProtKB-SubCell"/>
</dbReference>
<dbReference type="GO" id="GO:0002189">
    <property type="term" value="C:ribose phosphate diphosphokinase complex"/>
    <property type="evidence" value="ECO:0007669"/>
    <property type="project" value="TreeGrafter"/>
</dbReference>
<dbReference type="GO" id="GO:0005524">
    <property type="term" value="F:ATP binding"/>
    <property type="evidence" value="ECO:0007669"/>
    <property type="project" value="UniProtKB-KW"/>
</dbReference>
<dbReference type="GO" id="GO:0016301">
    <property type="term" value="F:kinase activity"/>
    <property type="evidence" value="ECO:0007669"/>
    <property type="project" value="UniProtKB-KW"/>
</dbReference>
<dbReference type="GO" id="GO:0000287">
    <property type="term" value="F:magnesium ion binding"/>
    <property type="evidence" value="ECO:0007669"/>
    <property type="project" value="UniProtKB-UniRule"/>
</dbReference>
<dbReference type="GO" id="GO:0004749">
    <property type="term" value="F:ribose phosphate diphosphokinase activity"/>
    <property type="evidence" value="ECO:0007669"/>
    <property type="project" value="UniProtKB-UniRule"/>
</dbReference>
<dbReference type="GO" id="GO:0006015">
    <property type="term" value="P:5-phosphoribose 1-diphosphate biosynthetic process"/>
    <property type="evidence" value="ECO:0007669"/>
    <property type="project" value="UniProtKB-UniRule"/>
</dbReference>
<dbReference type="GO" id="GO:0006164">
    <property type="term" value="P:purine nucleotide biosynthetic process"/>
    <property type="evidence" value="ECO:0007669"/>
    <property type="project" value="TreeGrafter"/>
</dbReference>
<dbReference type="GO" id="GO:0009156">
    <property type="term" value="P:ribonucleoside monophosphate biosynthetic process"/>
    <property type="evidence" value="ECO:0007669"/>
    <property type="project" value="InterPro"/>
</dbReference>
<dbReference type="CDD" id="cd06223">
    <property type="entry name" value="PRTases_typeI"/>
    <property type="match status" value="1"/>
</dbReference>
<dbReference type="FunFam" id="3.40.50.2020:FF:000002">
    <property type="entry name" value="Ribose-phosphate pyrophosphokinase"/>
    <property type="match status" value="1"/>
</dbReference>
<dbReference type="FunFam" id="3.40.50.2020:FF:000007">
    <property type="entry name" value="Ribose-phosphate pyrophosphokinase"/>
    <property type="match status" value="1"/>
</dbReference>
<dbReference type="Gene3D" id="3.40.50.2020">
    <property type="match status" value="2"/>
</dbReference>
<dbReference type="HAMAP" id="MF_00583_B">
    <property type="entry name" value="RibP_PPkinase_B"/>
    <property type="match status" value="1"/>
</dbReference>
<dbReference type="InterPro" id="IPR000842">
    <property type="entry name" value="PRib_PP_synth_CS"/>
</dbReference>
<dbReference type="InterPro" id="IPR029099">
    <property type="entry name" value="Pribosyltran_N"/>
</dbReference>
<dbReference type="InterPro" id="IPR000836">
    <property type="entry name" value="PRibTrfase_dom"/>
</dbReference>
<dbReference type="InterPro" id="IPR029057">
    <property type="entry name" value="PRTase-like"/>
</dbReference>
<dbReference type="InterPro" id="IPR005946">
    <property type="entry name" value="Rib-P_diPkinase"/>
</dbReference>
<dbReference type="InterPro" id="IPR037515">
    <property type="entry name" value="Rib-P_diPkinase_bac"/>
</dbReference>
<dbReference type="NCBIfam" id="NF002320">
    <property type="entry name" value="PRK01259.1"/>
    <property type="match status" value="1"/>
</dbReference>
<dbReference type="NCBIfam" id="TIGR01251">
    <property type="entry name" value="ribP_PPkin"/>
    <property type="match status" value="1"/>
</dbReference>
<dbReference type="PANTHER" id="PTHR10210">
    <property type="entry name" value="RIBOSE-PHOSPHATE DIPHOSPHOKINASE FAMILY MEMBER"/>
    <property type="match status" value="1"/>
</dbReference>
<dbReference type="PANTHER" id="PTHR10210:SF41">
    <property type="entry name" value="RIBOSE-PHOSPHATE PYROPHOSPHOKINASE 1, CHLOROPLASTIC"/>
    <property type="match status" value="1"/>
</dbReference>
<dbReference type="Pfam" id="PF14572">
    <property type="entry name" value="Pribosyl_synth"/>
    <property type="match status" value="1"/>
</dbReference>
<dbReference type="Pfam" id="PF13793">
    <property type="entry name" value="Pribosyltran_N"/>
    <property type="match status" value="1"/>
</dbReference>
<dbReference type="SMART" id="SM01400">
    <property type="entry name" value="Pribosyltran_N"/>
    <property type="match status" value="1"/>
</dbReference>
<dbReference type="SUPFAM" id="SSF53271">
    <property type="entry name" value="PRTase-like"/>
    <property type="match status" value="1"/>
</dbReference>
<dbReference type="PROSITE" id="PS00114">
    <property type="entry name" value="PRPP_SYNTHASE"/>
    <property type="match status" value="1"/>
</dbReference>
<proteinExistence type="inferred from homology"/>
<evidence type="ECO:0000255" key="1">
    <source>
        <dbReference type="HAMAP-Rule" id="MF_00583"/>
    </source>
</evidence>
<sequence>MRGYKIFTGSAHPEFGGEIAKYLGIPLSSATVNRFSDGEINIQISESVRGRDVFIVQPTCAPTNDNLMELLIMIDALKRSSASSINAVIPYFGYARQDRKAAPRVPITAKLVADLLQRAGATRVITMDLHAGQIQGFFDIPVDNLYGSIVFRDYVKSKHLPNPIIASPDIGGVARARYFADQLGLDLVIVDKKREKANVSEVMNIIGDVQGKDVILVDDMIDTAGTMAKAAEVLKSKGATSVIALGTHPVFSGSAYEKIEKGALDEMVVANTIPLKKESSKIKVLSVAPLFAEVIRRVYHNESVNSLFV</sequence>
<protein>
    <recommendedName>
        <fullName evidence="1">Ribose-phosphate pyrophosphokinase</fullName>
        <shortName evidence="1">RPPK</shortName>
        <ecNumber evidence="1">2.7.6.1</ecNumber>
    </recommendedName>
    <alternativeName>
        <fullName evidence="1">5-phospho-D-ribosyl alpha-1-diphosphate synthase</fullName>
    </alternativeName>
    <alternativeName>
        <fullName evidence="1">Phosphoribosyl diphosphate synthase</fullName>
    </alternativeName>
    <alternativeName>
        <fullName evidence="1">Phosphoribosyl pyrophosphate synthase</fullName>
        <shortName evidence="1">P-Rib-PP synthase</shortName>
        <shortName evidence="1">PRPP synthase</shortName>
        <shortName evidence="1">PRPPase</shortName>
    </alternativeName>
</protein>